<comment type="function">
    <text evidence="1">Negatively controls the salicylic acid (SA)-mediated pathway of programmed cell death in plant immunity.</text>
</comment>
<comment type="alternative products">
    <event type="alternative splicing"/>
    <isoform>
        <id>Q9STW5-1</id>
        <name>1</name>
        <sequence type="displayed"/>
    </isoform>
    <isoform>
        <id>Q9STW5-2</id>
        <name>2</name>
        <sequence type="described" ref="VSP_042282 VSP_042283"/>
    </isoform>
</comment>
<comment type="miscellaneous">
    <molecule>Isoform 2</molecule>
    <text evidence="4">May be due to an intron retention.</text>
</comment>
<comment type="similarity">
    <text evidence="4">Belongs to the complement C6/C7/C8/C9 (TC 1.C.39) family.</text>
</comment>
<comment type="sequence caution" evidence="4">
    <conflict type="miscellaneous discrepancy">
        <sequence resource="EMBL" id="BX826919"/>
    </conflict>
    <text>Sequencing errors.</text>
</comment>
<keyword id="KW-0025">Alternative splicing</keyword>
<keyword id="KW-0381">Hypersensitive response</keyword>
<keyword id="KW-0391">Immunity</keyword>
<keyword id="KW-0399">Innate immunity</keyword>
<keyword id="KW-0611">Plant defense</keyword>
<keyword id="KW-1185">Reference proteome</keyword>
<name>MACP2_ARATH</name>
<accession>Q9STW5</accession>
<accession>B3DN86</accession>
<accession>F4JQ79</accession>
<reference key="1">
    <citation type="journal article" date="1999" name="Nature">
        <title>Sequence and analysis of chromosome 4 of the plant Arabidopsis thaliana.</title>
        <authorList>
            <person name="Mayer K.F.X."/>
            <person name="Schueller C."/>
            <person name="Wambutt R."/>
            <person name="Murphy G."/>
            <person name="Volckaert G."/>
            <person name="Pohl T."/>
            <person name="Duesterhoeft A."/>
            <person name="Stiekema W."/>
            <person name="Entian K.-D."/>
            <person name="Terryn N."/>
            <person name="Harris B."/>
            <person name="Ansorge W."/>
            <person name="Brandt P."/>
            <person name="Grivell L.A."/>
            <person name="Rieger M."/>
            <person name="Weichselgartner M."/>
            <person name="de Simone V."/>
            <person name="Obermaier B."/>
            <person name="Mache R."/>
            <person name="Mueller M."/>
            <person name="Kreis M."/>
            <person name="Delseny M."/>
            <person name="Puigdomenech P."/>
            <person name="Watson M."/>
            <person name="Schmidtheini T."/>
            <person name="Reichert B."/>
            <person name="Portetelle D."/>
            <person name="Perez-Alonso M."/>
            <person name="Boutry M."/>
            <person name="Bancroft I."/>
            <person name="Vos P."/>
            <person name="Hoheisel J."/>
            <person name="Zimmermann W."/>
            <person name="Wedler H."/>
            <person name="Ridley P."/>
            <person name="Langham S.-A."/>
            <person name="McCullagh B."/>
            <person name="Bilham L."/>
            <person name="Robben J."/>
            <person name="van der Schueren J."/>
            <person name="Grymonprez B."/>
            <person name="Chuang Y.-J."/>
            <person name="Vandenbussche F."/>
            <person name="Braeken M."/>
            <person name="Weltjens I."/>
            <person name="Voet M."/>
            <person name="Bastiaens I."/>
            <person name="Aert R."/>
            <person name="Defoor E."/>
            <person name="Weitzenegger T."/>
            <person name="Bothe G."/>
            <person name="Ramsperger U."/>
            <person name="Hilbert H."/>
            <person name="Braun M."/>
            <person name="Holzer E."/>
            <person name="Brandt A."/>
            <person name="Peters S."/>
            <person name="van Staveren M."/>
            <person name="Dirkse W."/>
            <person name="Mooijman P."/>
            <person name="Klein Lankhorst R."/>
            <person name="Rose M."/>
            <person name="Hauf J."/>
            <person name="Koetter P."/>
            <person name="Berneiser S."/>
            <person name="Hempel S."/>
            <person name="Feldpausch M."/>
            <person name="Lamberth S."/>
            <person name="Van den Daele H."/>
            <person name="De Keyser A."/>
            <person name="Buysshaert C."/>
            <person name="Gielen J."/>
            <person name="Villarroel R."/>
            <person name="De Clercq R."/>
            <person name="van Montagu M."/>
            <person name="Rogers J."/>
            <person name="Cronin A."/>
            <person name="Quail M.A."/>
            <person name="Bray-Allen S."/>
            <person name="Clark L."/>
            <person name="Doggett J."/>
            <person name="Hall S."/>
            <person name="Kay M."/>
            <person name="Lennard N."/>
            <person name="McLay K."/>
            <person name="Mayes R."/>
            <person name="Pettett A."/>
            <person name="Rajandream M.A."/>
            <person name="Lyne M."/>
            <person name="Benes V."/>
            <person name="Rechmann S."/>
            <person name="Borkova D."/>
            <person name="Bloecker H."/>
            <person name="Scharfe M."/>
            <person name="Grimm M."/>
            <person name="Loehnert T.-H."/>
            <person name="Dose S."/>
            <person name="de Haan M."/>
            <person name="Maarse A.C."/>
            <person name="Schaefer M."/>
            <person name="Mueller-Auer S."/>
            <person name="Gabel C."/>
            <person name="Fuchs M."/>
            <person name="Fartmann B."/>
            <person name="Granderath K."/>
            <person name="Dauner D."/>
            <person name="Herzl A."/>
            <person name="Neumann S."/>
            <person name="Argiriou A."/>
            <person name="Vitale D."/>
            <person name="Liguori R."/>
            <person name="Piravandi E."/>
            <person name="Massenet O."/>
            <person name="Quigley F."/>
            <person name="Clabauld G."/>
            <person name="Muendlein A."/>
            <person name="Felber R."/>
            <person name="Schnabl S."/>
            <person name="Hiller R."/>
            <person name="Schmidt W."/>
            <person name="Lecharny A."/>
            <person name="Aubourg S."/>
            <person name="Chefdor F."/>
            <person name="Cooke R."/>
            <person name="Berger C."/>
            <person name="Monfort A."/>
            <person name="Casacuberta E."/>
            <person name="Gibbons T."/>
            <person name="Weber N."/>
            <person name="Vandenbol M."/>
            <person name="Bargues M."/>
            <person name="Terol J."/>
            <person name="Torres A."/>
            <person name="Perez-Perez A."/>
            <person name="Purnelle B."/>
            <person name="Bent E."/>
            <person name="Johnson S."/>
            <person name="Tacon D."/>
            <person name="Jesse T."/>
            <person name="Heijnen L."/>
            <person name="Schwarz S."/>
            <person name="Scholler P."/>
            <person name="Heber S."/>
            <person name="Francs P."/>
            <person name="Bielke C."/>
            <person name="Frishman D."/>
            <person name="Haase D."/>
            <person name="Lemcke K."/>
            <person name="Mewes H.-W."/>
            <person name="Stocker S."/>
            <person name="Zaccaria P."/>
            <person name="Bevan M."/>
            <person name="Wilson R.K."/>
            <person name="de la Bastide M."/>
            <person name="Habermann K."/>
            <person name="Parnell L."/>
            <person name="Dedhia N."/>
            <person name="Gnoj L."/>
            <person name="Schutz K."/>
            <person name="Huang E."/>
            <person name="Spiegel L."/>
            <person name="Sekhon M."/>
            <person name="Murray J."/>
            <person name="Sheet P."/>
            <person name="Cordes M."/>
            <person name="Abu-Threideh J."/>
            <person name="Stoneking T."/>
            <person name="Kalicki J."/>
            <person name="Graves T."/>
            <person name="Harmon G."/>
            <person name="Edwards J."/>
            <person name="Latreille P."/>
            <person name="Courtney L."/>
            <person name="Cloud J."/>
            <person name="Abbott A."/>
            <person name="Scott K."/>
            <person name="Johnson D."/>
            <person name="Minx P."/>
            <person name="Bentley D."/>
            <person name="Fulton B."/>
            <person name="Miller N."/>
            <person name="Greco T."/>
            <person name="Kemp K."/>
            <person name="Kramer J."/>
            <person name="Fulton L."/>
            <person name="Mardis E."/>
            <person name="Dante M."/>
            <person name="Pepin K."/>
            <person name="Hillier L.W."/>
            <person name="Nelson J."/>
            <person name="Spieth J."/>
            <person name="Ryan E."/>
            <person name="Andrews S."/>
            <person name="Geisel C."/>
            <person name="Layman D."/>
            <person name="Du H."/>
            <person name="Ali J."/>
            <person name="Berghoff A."/>
            <person name="Jones K."/>
            <person name="Drone K."/>
            <person name="Cotton M."/>
            <person name="Joshu C."/>
            <person name="Antonoiu B."/>
            <person name="Zidanic M."/>
            <person name="Strong C."/>
            <person name="Sun H."/>
            <person name="Lamar B."/>
            <person name="Yordan C."/>
            <person name="Ma P."/>
            <person name="Zhong J."/>
            <person name="Preston R."/>
            <person name="Vil D."/>
            <person name="Shekher M."/>
            <person name="Matero A."/>
            <person name="Shah R."/>
            <person name="Swaby I.K."/>
            <person name="O'Shaughnessy A."/>
            <person name="Rodriguez M."/>
            <person name="Hoffman J."/>
            <person name="Till S."/>
            <person name="Granat S."/>
            <person name="Shohdy N."/>
            <person name="Hasegawa A."/>
            <person name="Hameed A."/>
            <person name="Lodhi M."/>
            <person name="Johnson A."/>
            <person name="Chen E."/>
            <person name="Marra M.A."/>
            <person name="Martienssen R."/>
            <person name="McCombie W.R."/>
        </authorList>
    </citation>
    <scope>NUCLEOTIDE SEQUENCE [LARGE SCALE GENOMIC DNA]</scope>
    <source>
        <strain>cv. Columbia</strain>
    </source>
</reference>
<reference key="2">
    <citation type="journal article" date="2017" name="Plant J.">
        <title>Araport11: a complete reannotation of the Arabidopsis thaliana reference genome.</title>
        <authorList>
            <person name="Cheng C.Y."/>
            <person name="Krishnakumar V."/>
            <person name="Chan A.P."/>
            <person name="Thibaud-Nissen F."/>
            <person name="Schobel S."/>
            <person name="Town C.D."/>
        </authorList>
    </citation>
    <scope>GENOME REANNOTATION</scope>
    <source>
        <strain>cv. Columbia</strain>
    </source>
</reference>
<reference key="3">
    <citation type="journal article" date="2004" name="Genome Res.">
        <title>Whole genome sequence comparisons and 'full-length' cDNA sequences: a combined approach to evaluate and improve Arabidopsis genome annotation.</title>
        <authorList>
            <person name="Castelli V."/>
            <person name="Aury J.-M."/>
            <person name="Jaillon O."/>
            <person name="Wincker P."/>
            <person name="Clepet C."/>
            <person name="Menard M."/>
            <person name="Cruaud C."/>
            <person name="Quetier F."/>
            <person name="Scarpelli C."/>
            <person name="Schaechter V."/>
            <person name="Temple G."/>
            <person name="Caboche M."/>
            <person name="Weissenbach J."/>
            <person name="Salanoubat M."/>
        </authorList>
    </citation>
    <scope>NUCLEOTIDE SEQUENCE [LARGE SCALE MRNA] (ISOFORM 1)</scope>
    <source>
        <strain>cv. Columbia</strain>
    </source>
</reference>
<reference key="4">
    <citation type="submission" date="2008-06" db="EMBL/GenBank/DDBJ databases">
        <title>Arabidopsis ORF clones.</title>
        <authorList>
            <person name="de los Reyes C."/>
            <person name="Quan R."/>
            <person name="Chen H."/>
            <person name="Bautista V."/>
            <person name="Kim C.J."/>
            <person name="Ecker J.R."/>
        </authorList>
    </citation>
    <scope>NUCLEOTIDE SEQUENCE [LARGE SCALE MRNA] (ISOFORM 2)</scope>
    <source>
        <strain>cv. Columbia</strain>
    </source>
</reference>
<reference key="5">
    <citation type="journal article" date="2006" name="Plant Mol. Biol.">
        <title>Loss of Necrotic Spotted Lesions 1 associates with cell death and defense responses in Arabidopsis thaliana.</title>
        <authorList>
            <person name="Noutoshi Y."/>
            <person name="Kuromori T."/>
            <person name="Wada T."/>
            <person name="Hirayama T."/>
            <person name="Kamiya A."/>
            <person name="Imura Y."/>
            <person name="Yasuda M."/>
            <person name="Nakashita H."/>
            <person name="Shirasu K."/>
            <person name="Shinozaki K."/>
        </authorList>
    </citation>
    <scope>GENE FAMILY</scope>
</reference>
<dbReference type="EMBL" id="AL078637">
    <property type="protein sequence ID" value="CAB45064.1"/>
    <property type="molecule type" value="Genomic_DNA"/>
</dbReference>
<dbReference type="EMBL" id="AL161561">
    <property type="protein sequence ID" value="CAB79339.1"/>
    <property type="molecule type" value="Genomic_DNA"/>
</dbReference>
<dbReference type="EMBL" id="CP002687">
    <property type="protein sequence ID" value="AEE84885.1"/>
    <property type="molecule type" value="Genomic_DNA"/>
</dbReference>
<dbReference type="EMBL" id="CP002687">
    <property type="protein sequence ID" value="AEE84886.1"/>
    <property type="molecule type" value="Genomic_DNA"/>
</dbReference>
<dbReference type="EMBL" id="CP002687">
    <property type="protein sequence ID" value="ANM66407.1"/>
    <property type="molecule type" value="Genomic_DNA"/>
</dbReference>
<dbReference type="EMBL" id="BX826919">
    <property type="status" value="NOT_ANNOTATED_CDS"/>
    <property type="molecule type" value="mRNA"/>
</dbReference>
<dbReference type="EMBL" id="BT032874">
    <property type="protein sequence ID" value="ACD89064.1"/>
    <property type="molecule type" value="mRNA"/>
</dbReference>
<dbReference type="PIR" id="T09892">
    <property type="entry name" value="T09892"/>
</dbReference>
<dbReference type="RefSeq" id="NP_001328303.1">
    <molecule id="Q9STW5-1"/>
    <property type="nucleotide sequence ID" value="NM_001341662.1"/>
</dbReference>
<dbReference type="RefSeq" id="NP_567698.1">
    <molecule id="Q9STW5-2"/>
    <property type="nucleotide sequence ID" value="NM_118562.2"/>
</dbReference>
<dbReference type="RefSeq" id="NP_849433.1">
    <molecule id="Q9STW5-1"/>
    <property type="nucleotide sequence ID" value="NM_179102.5"/>
</dbReference>
<dbReference type="FunCoup" id="Q9STW5">
    <property type="interactions" value="3057"/>
</dbReference>
<dbReference type="STRING" id="3702.Q9STW5"/>
<dbReference type="GlyGen" id="Q9STW5">
    <property type="glycosylation" value="1 site"/>
</dbReference>
<dbReference type="iPTMnet" id="Q9STW5"/>
<dbReference type="SwissPalm" id="Q9STW5"/>
<dbReference type="PaxDb" id="3702-AT4G24290.2"/>
<dbReference type="ProteomicsDB" id="238233">
    <molecule id="Q9STW5-1"/>
</dbReference>
<dbReference type="EnsemblPlants" id="AT4G24290.1">
    <molecule id="Q9STW5-2"/>
    <property type="protein sequence ID" value="AT4G24290.1"/>
    <property type="gene ID" value="AT4G24290"/>
</dbReference>
<dbReference type="EnsemblPlants" id="AT4G24290.2">
    <molecule id="Q9STW5-1"/>
    <property type="protein sequence ID" value="AT4G24290.2"/>
    <property type="gene ID" value="AT4G24290"/>
</dbReference>
<dbReference type="EnsemblPlants" id="AT4G24290.3">
    <molecule id="Q9STW5-1"/>
    <property type="protein sequence ID" value="AT4G24290.3"/>
    <property type="gene ID" value="AT4G24290"/>
</dbReference>
<dbReference type="GeneID" id="828532"/>
<dbReference type="Gramene" id="AT4G24290.1">
    <molecule id="Q9STW5-2"/>
    <property type="protein sequence ID" value="AT4G24290.1"/>
    <property type="gene ID" value="AT4G24290"/>
</dbReference>
<dbReference type="Gramene" id="AT4G24290.2">
    <molecule id="Q9STW5-1"/>
    <property type="protein sequence ID" value="AT4G24290.2"/>
    <property type="gene ID" value="AT4G24290"/>
</dbReference>
<dbReference type="Gramene" id="AT4G24290.3">
    <molecule id="Q9STW5-1"/>
    <property type="protein sequence ID" value="AT4G24290.3"/>
    <property type="gene ID" value="AT4G24290"/>
</dbReference>
<dbReference type="KEGG" id="ath:AT4G24290"/>
<dbReference type="Araport" id="AT4G24290"/>
<dbReference type="TAIR" id="AT4G24290"/>
<dbReference type="eggNOG" id="ENOG502QPZ4">
    <property type="taxonomic scope" value="Eukaryota"/>
</dbReference>
<dbReference type="HOGENOM" id="CLU_034245_1_0_1"/>
<dbReference type="InParanoid" id="Q9STW5"/>
<dbReference type="OMA" id="EDTVCIC"/>
<dbReference type="OrthoDB" id="1366754at2759"/>
<dbReference type="PhylomeDB" id="Q9STW5"/>
<dbReference type="PRO" id="PR:Q9STW5"/>
<dbReference type="Proteomes" id="UP000006548">
    <property type="component" value="Chromosome 4"/>
</dbReference>
<dbReference type="ExpressionAtlas" id="Q9STW5">
    <property type="expression patterns" value="baseline and differential"/>
</dbReference>
<dbReference type="GO" id="GO:0005886">
    <property type="term" value="C:plasma membrane"/>
    <property type="evidence" value="ECO:0007005"/>
    <property type="project" value="TAIR"/>
</dbReference>
<dbReference type="GO" id="GO:0009626">
    <property type="term" value="P:plant-type hypersensitive response"/>
    <property type="evidence" value="ECO:0007669"/>
    <property type="project" value="UniProtKB-KW"/>
</dbReference>
<dbReference type="GO" id="GO:2000031">
    <property type="term" value="P:regulation of salicylic acid mediated signaling pathway"/>
    <property type="evidence" value="ECO:0007669"/>
    <property type="project" value="InterPro"/>
</dbReference>
<dbReference type="InterPro" id="IPR044663">
    <property type="entry name" value="CAD1/NSL1-like"/>
</dbReference>
<dbReference type="InterPro" id="IPR020864">
    <property type="entry name" value="MACPF"/>
</dbReference>
<dbReference type="PANTHER" id="PTHR33199">
    <property type="entry name" value="MACPF DOMAIN-CONTAINING PROTEIN CAD1"/>
    <property type="match status" value="1"/>
</dbReference>
<dbReference type="PANTHER" id="PTHR33199:SF1">
    <property type="entry name" value="OS01G0958700 PROTEIN"/>
    <property type="match status" value="1"/>
</dbReference>
<dbReference type="Pfam" id="PF01823">
    <property type="entry name" value="MACPF"/>
    <property type="match status" value="1"/>
</dbReference>
<dbReference type="SMART" id="SM00457">
    <property type="entry name" value="MACPF"/>
    <property type="match status" value="1"/>
</dbReference>
<dbReference type="PROSITE" id="PS51412">
    <property type="entry name" value="MACPF_2"/>
    <property type="match status" value="1"/>
</dbReference>
<protein>
    <recommendedName>
        <fullName>MACPF domain-containing protein At4g24290</fullName>
    </recommendedName>
</protein>
<organism>
    <name type="scientific">Arabidopsis thaliana</name>
    <name type="common">Mouse-ear cress</name>
    <dbReference type="NCBI Taxonomy" id="3702"/>
    <lineage>
        <taxon>Eukaryota</taxon>
        <taxon>Viridiplantae</taxon>
        <taxon>Streptophyta</taxon>
        <taxon>Embryophyta</taxon>
        <taxon>Tracheophyta</taxon>
        <taxon>Spermatophyta</taxon>
        <taxon>Magnoliopsida</taxon>
        <taxon>eudicotyledons</taxon>
        <taxon>Gunneridae</taxon>
        <taxon>Pentapetalae</taxon>
        <taxon>rosids</taxon>
        <taxon>malvids</taxon>
        <taxon>Brassicales</taxon>
        <taxon>Brassicaceae</taxon>
        <taxon>Camelineae</taxon>
        <taxon>Arabidopsis</taxon>
    </lineage>
</organism>
<gene>
    <name type="ordered locus">At4g24290</name>
    <name type="ORF">T22A6.120</name>
</gene>
<sequence>MALRLPASKAAEVAIGSIGCGYDLAIDLRLKYCKGGSKDSRLLDIKEGDDNCEIVLPGGISIPNVSKSIKCDKGERMRFRSDILPFQQMAEQFNQELSLAGKIPSGLFNAMFEFSSCWQKDAAYTKNLAFDGVFISLYSVALDKSQVLLREHVKQAVPSTWDPAALARFIDIYGTHIIVSVKMGGKDVIYAKQQHSSKLQPEDLQKRLKEVADKRFVEASVVHNTGSERVQASSKVETKEQRLRFADTSSLGSYANKEDYVFMCKRRGGNDNRNLMHNEWLQTVQMEPDVISMSFIPITSLLNGVPGSGFLSHAINLYLRYKPPIEELHQFLEFQLPRQWAPVFSELPLGPQRKQQSCASLQFSFFGPKLYVNTTPVDVGKRPITGMRLYLEGRRSNRLAIHLQHLSSLPKIYQLEDDLNRSIRQESHDRRYYEKVNWKNYSHVCTEPVESDDDLSVVTGAQLHVESHGFKNVLFLRLCFSRVVGATLVKNSEWDEAVGFAPKSGLISTLISHHFTAAQKPPPRPADVNINSAIYPGGPPVPTQAPKLLKFVDTSEMTRGPQESPGYWVVSGARLLVEKGKISLKVKYSLFTPILGDEVIEEAYEG</sequence>
<evidence type="ECO:0000250" key="1"/>
<evidence type="ECO:0000255" key="2">
    <source>
        <dbReference type="PROSITE-ProRule" id="PRU00745"/>
    </source>
</evidence>
<evidence type="ECO:0000303" key="3">
    <source ref="4"/>
</evidence>
<evidence type="ECO:0000305" key="4"/>
<feature type="chain" id="PRO_0000415542" description="MACPF domain-containing protein At4g24290">
    <location>
        <begin position="1"/>
        <end position="606"/>
    </location>
</feature>
<feature type="domain" description="MACPF" evidence="2">
    <location>
        <begin position="1"/>
        <end position="332"/>
    </location>
</feature>
<feature type="splice variant" id="VSP_042282" description="In isoform 2." evidence="3">
    <original>YKPPIEELHQFLEFQLPRQWAPVFSELPLG</original>
    <variation>CKPINHLRFVHFFLELFFILVVSFTFRLEV</variation>
    <location>
        <begin position="321"/>
        <end position="350"/>
    </location>
</feature>
<feature type="splice variant" id="VSP_042283" description="In isoform 2." evidence="3">
    <location>
        <begin position="351"/>
        <end position="606"/>
    </location>
</feature>
<feature type="sequence conflict" description="In Ref. 4; ACD89064." evidence="4" ref="4">
    <original>W</original>
    <variation>R</variation>
    <location>
        <position position="280"/>
    </location>
</feature>
<proteinExistence type="evidence at transcript level"/>